<proteinExistence type="inferred from homology"/>
<evidence type="ECO:0000255" key="1">
    <source>
        <dbReference type="HAMAP-Rule" id="MF_00281"/>
    </source>
</evidence>
<reference key="1">
    <citation type="journal article" date="2007" name="Nat. Biotechnol.">
        <title>Complete genome sequence of the myxobacterium Sorangium cellulosum.</title>
        <authorList>
            <person name="Schneiker S."/>
            <person name="Perlova O."/>
            <person name="Kaiser O."/>
            <person name="Gerth K."/>
            <person name="Alici A."/>
            <person name="Altmeyer M.O."/>
            <person name="Bartels D."/>
            <person name="Bekel T."/>
            <person name="Beyer S."/>
            <person name="Bode E."/>
            <person name="Bode H.B."/>
            <person name="Bolten C.J."/>
            <person name="Choudhuri J.V."/>
            <person name="Doss S."/>
            <person name="Elnakady Y.A."/>
            <person name="Frank B."/>
            <person name="Gaigalat L."/>
            <person name="Goesmann A."/>
            <person name="Groeger C."/>
            <person name="Gross F."/>
            <person name="Jelsbak L."/>
            <person name="Jelsbak L."/>
            <person name="Kalinowski J."/>
            <person name="Kegler C."/>
            <person name="Knauber T."/>
            <person name="Konietzny S."/>
            <person name="Kopp M."/>
            <person name="Krause L."/>
            <person name="Krug D."/>
            <person name="Linke B."/>
            <person name="Mahmud T."/>
            <person name="Martinez-Arias R."/>
            <person name="McHardy A.C."/>
            <person name="Merai M."/>
            <person name="Meyer F."/>
            <person name="Mormann S."/>
            <person name="Munoz-Dorado J."/>
            <person name="Perez J."/>
            <person name="Pradella S."/>
            <person name="Rachid S."/>
            <person name="Raddatz G."/>
            <person name="Rosenau F."/>
            <person name="Rueckert C."/>
            <person name="Sasse F."/>
            <person name="Scharfe M."/>
            <person name="Schuster S.C."/>
            <person name="Suen G."/>
            <person name="Treuner-Lange A."/>
            <person name="Velicer G.J."/>
            <person name="Vorholter F.-J."/>
            <person name="Weissman K.J."/>
            <person name="Welch R.D."/>
            <person name="Wenzel S.C."/>
            <person name="Whitworth D.E."/>
            <person name="Wilhelm S."/>
            <person name="Wittmann C."/>
            <person name="Bloecker H."/>
            <person name="Puehler A."/>
            <person name="Mueller R."/>
        </authorList>
    </citation>
    <scope>NUCLEOTIDE SEQUENCE [LARGE SCALE GENOMIC DNA]</scope>
    <source>
        <strain>So ce56</strain>
    </source>
</reference>
<name>SYFA_SORC5</name>
<accession>A9GN91</accession>
<feature type="chain" id="PRO_1000119402" description="Phenylalanine--tRNA ligase alpha subunit">
    <location>
        <begin position="1"/>
        <end position="349"/>
    </location>
</feature>
<feature type="binding site" evidence="1">
    <location>
        <position position="262"/>
    </location>
    <ligand>
        <name>Mg(2+)</name>
        <dbReference type="ChEBI" id="CHEBI:18420"/>
        <note>shared with beta subunit</note>
    </ligand>
</feature>
<organism>
    <name type="scientific">Sorangium cellulosum (strain So ce56)</name>
    <name type="common">Polyangium cellulosum (strain So ce56)</name>
    <dbReference type="NCBI Taxonomy" id="448385"/>
    <lineage>
        <taxon>Bacteria</taxon>
        <taxon>Pseudomonadati</taxon>
        <taxon>Myxococcota</taxon>
        <taxon>Polyangia</taxon>
        <taxon>Polyangiales</taxon>
        <taxon>Polyangiaceae</taxon>
        <taxon>Sorangium</taxon>
    </lineage>
</organism>
<gene>
    <name evidence="1" type="primary">pheS</name>
    <name type="ordered locus">sce3391</name>
</gene>
<protein>
    <recommendedName>
        <fullName evidence="1">Phenylalanine--tRNA ligase alpha subunit</fullName>
        <ecNumber evidence="1">6.1.1.20</ecNumber>
    </recommendedName>
    <alternativeName>
        <fullName evidence="1">Phenylalanyl-tRNA synthetase alpha subunit</fullName>
        <shortName evidence="1">PheRS</shortName>
    </alternativeName>
</protein>
<keyword id="KW-0030">Aminoacyl-tRNA synthetase</keyword>
<keyword id="KW-0067">ATP-binding</keyword>
<keyword id="KW-0963">Cytoplasm</keyword>
<keyword id="KW-0436">Ligase</keyword>
<keyword id="KW-0460">Magnesium</keyword>
<keyword id="KW-0479">Metal-binding</keyword>
<keyword id="KW-0547">Nucleotide-binding</keyword>
<keyword id="KW-0648">Protein biosynthesis</keyword>
<keyword id="KW-1185">Reference proteome</keyword>
<sequence length="349" mass="38721">MSGPELGRLIDEVDRTVDVQFAAAGDLDELNRLYASLLGRRGSLNALMKQLPGAAPEERKALGQRLNAVKGRVERAREEATARIKRAARDRELSAPPLDITLPGRWRAPGRPHPIMRTLDEIVDIFVGLGFDVAEGPQIELARYNFDLLGFPADHPAMDMHDTFYMAGDPGQNVLLRTHTSPVQVREMLSHPPPVMIVAPGVVYRRDDDASHSPMFVQIEGLVVDRDVSLADLKGLLEVYSRRMFGEATRTRFRPSYFPFTEPSAELDVSCLVCFGENRACPQCKGTGWLEVLGCGMVHPTVLRNVGIDPEEYTGLAFGIGVDRTANMKFAVDDIRAFYENDVRFLGSL</sequence>
<dbReference type="EC" id="6.1.1.20" evidence="1"/>
<dbReference type="EMBL" id="AM746676">
    <property type="protein sequence ID" value="CAN93550.1"/>
    <property type="molecule type" value="Genomic_DNA"/>
</dbReference>
<dbReference type="RefSeq" id="WP_012236022.1">
    <property type="nucleotide sequence ID" value="NC_010162.1"/>
</dbReference>
<dbReference type="SMR" id="A9GN91"/>
<dbReference type="STRING" id="448385.sce3391"/>
<dbReference type="KEGG" id="scl:sce3391"/>
<dbReference type="eggNOG" id="COG0016">
    <property type="taxonomic scope" value="Bacteria"/>
</dbReference>
<dbReference type="HOGENOM" id="CLU_025086_0_0_7"/>
<dbReference type="OrthoDB" id="9800719at2"/>
<dbReference type="BioCyc" id="SCEL448385:SCE_RS17375-MONOMER"/>
<dbReference type="Proteomes" id="UP000002139">
    <property type="component" value="Chromosome"/>
</dbReference>
<dbReference type="GO" id="GO:0005737">
    <property type="term" value="C:cytoplasm"/>
    <property type="evidence" value="ECO:0007669"/>
    <property type="project" value="UniProtKB-SubCell"/>
</dbReference>
<dbReference type="GO" id="GO:0005524">
    <property type="term" value="F:ATP binding"/>
    <property type="evidence" value="ECO:0007669"/>
    <property type="project" value="UniProtKB-UniRule"/>
</dbReference>
<dbReference type="GO" id="GO:0000287">
    <property type="term" value="F:magnesium ion binding"/>
    <property type="evidence" value="ECO:0007669"/>
    <property type="project" value="UniProtKB-UniRule"/>
</dbReference>
<dbReference type="GO" id="GO:0004826">
    <property type="term" value="F:phenylalanine-tRNA ligase activity"/>
    <property type="evidence" value="ECO:0007669"/>
    <property type="project" value="UniProtKB-UniRule"/>
</dbReference>
<dbReference type="GO" id="GO:0000049">
    <property type="term" value="F:tRNA binding"/>
    <property type="evidence" value="ECO:0007669"/>
    <property type="project" value="InterPro"/>
</dbReference>
<dbReference type="GO" id="GO:0006432">
    <property type="term" value="P:phenylalanyl-tRNA aminoacylation"/>
    <property type="evidence" value="ECO:0007669"/>
    <property type="project" value="UniProtKB-UniRule"/>
</dbReference>
<dbReference type="CDD" id="cd00496">
    <property type="entry name" value="PheRS_alpha_core"/>
    <property type="match status" value="1"/>
</dbReference>
<dbReference type="Gene3D" id="3.30.930.10">
    <property type="entry name" value="Bira Bifunctional Protein, Domain 2"/>
    <property type="match status" value="1"/>
</dbReference>
<dbReference type="HAMAP" id="MF_00281">
    <property type="entry name" value="Phe_tRNA_synth_alpha1"/>
    <property type="match status" value="1"/>
</dbReference>
<dbReference type="InterPro" id="IPR006195">
    <property type="entry name" value="aa-tRNA-synth_II"/>
</dbReference>
<dbReference type="InterPro" id="IPR045864">
    <property type="entry name" value="aa-tRNA-synth_II/BPL/LPL"/>
</dbReference>
<dbReference type="InterPro" id="IPR004529">
    <property type="entry name" value="Phe-tRNA-synth_IIc_asu"/>
</dbReference>
<dbReference type="InterPro" id="IPR004188">
    <property type="entry name" value="Phe-tRNA_ligase_II_N"/>
</dbReference>
<dbReference type="InterPro" id="IPR022911">
    <property type="entry name" value="Phe_tRNA_ligase_alpha1_bac"/>
</dbReference>
<dbReference type="InterPro" id="IPR002319">
    <property type="entry name" value="Phenylalanyl-tRNA_Synthase"/>
</dbReference>
<dbReference type="InterPro" id="IPR010978">
    <property type="entry name" value="tRNA-bd_arm"/>
</dbReference>
<dbReference type="NCBIfam" id="TIGR00468">
    <property type="entry name" value="pheS"/>
    <property type="match status" value="1"/>
</dbReference>
<dbReference type="PANTHER" id="PTHR11538:SF41">
    <property type="entry name" value="PHENYLALANINE--TRNA LIGASE, MITOCHONDRIAL"/>
    <property type="match status" value="1"/>
</dbReference>
<dbReference type="PANTHER" id="PTHR11538">
    <property type="entry name" value="PHENYLALANYL-TRNA SYNTHETASE"/>
    <property type="match status" value="1"/>
</dbReference>
<dbReference type="Pfam" id="PF02912">
    <property type="entry name" value="Phe_tRNA-synt_N"/>
    <property type="match status" value="1"/>
</dbReference>
<dbReference type="Pfam" id="PF01409">
    <property type="entry name" value="tRNA-synt_2d"/>
    <property type="match status" value="1"/>
</dbReference>
<dbReference type="SUPFAM" id="SSF55681">
    <property type="entry name" value="Class II aaRS and biotin synthetases"/>
    <property type="match status" value="1"/>
</dbReference>
<dbReference type="SUPFAM" id="SSF46589">
    <property type="entry name" value="tRNA-binding arm"/>
    <property type="match status" value="1"/>
</dbReference>
<dbReference type="PROSITE" id="PS50862">
    <property type="entry name" value="AA_TRNA_LIGASE_II"/>
    <property type="match status" value="1"/>
</dbReference>
<comment type="catalytic activity">
    <reaction evidence="1">
        <text>tRNA(Phe) + L-phenylalanine + ATP = L-phenylalanyl-tRNA(Phe) + AMP + diphosphate + H(+)</text>
        <dbReference type="Rhea" id="RHEA:19413"/>
        <dbReference type="Rhea" id="RHEA-COMP:9668"/>
        <dbReference type="Rhea" id="RHEA-COMP:9699"/>
        <dbReference type="ChEBI" id="CHEBI:15378"/>
        <dbReference type="ChEBI" id="CHEBI:30616"/>
        <dbReference type="ChEBI" id="CHEBI:33019"/>
        <dbReference type="ChEBI" id="CHEBI:58095"/>
        <dbReference type="ChEBI" id="CHEBI:78442"/>
        <dbReference type="ChEBI" id="CHEBI:78531"/>
        <dbReference type="ChEBI" id="CHEBI:456215"/>
        <dbReference type="EC" id="6.1.1.20"/>
    </reaction>
</comment>
<comment type="cofactor">
    <cofactor evidence="1">
        <name>Mg(2+)</name>
        <dbReference type="ChEBI" id="CHEBI:18420"/>
    </cofactor>
    <text evidence="1">Binds 2 magnesium ions per tetramer.</text>
</comment>
<comment type="subunit">
    <text evidence="1">Tetramer of two alpha and two beta subunits.</text>
</comment>
<comment type="subcellular location">
    <subcellularLocation>
        <location evidence="1">Cytoplasm</location>
    </subcellularLocation>
</comment>
<comment type="similarity">
    <text evidence="1">Belongs to the class-II aminoacyl-tRNA synthetase family. Phe-tRNA synthetase alpha subunit type 1 subfamily.</text>
</comment>